<reference evidence="3" key="1">
    <citation type="journal article" date="2006" name="J. Biol. Chem.">
        <title>The oxygen transport system in three species of the boreal fish family Gadidae. Molecular phylogeny of hemoglobin.</title>
        <authorList>
            <person name="Verde C."/>
            <person name="Balestrieri M."/>
            <person name="de Pascale D."/>
            <person name="Pagnozzi D."/>
            <person name="Lecointre G."/>
            <person name="di Prisco G."/>
        </authorList>
    </citation>
    <scope>PROTEIN SEQUENCE OF 2-147</scope>
    <scope>FUNCTION</scope>
    <scope>SUBUNIT</scope>
    <source>
        <tissue evidence="2">Blood</tissue>
    </source>
</reference>
<dbReference type="SMR" id="P84611"/>
<dbReference type="STRING" id="8049.ENSGMOP00000021753"/>
<dbReference type="Proteomes" id="UP000694546">
    <property type="component" value="Unplaced"/>
</dbReference>
<dbReference type="GO" id="GO:0072562">
    <property type="term" value="C:blood microparticle"/>
    <property type="evidence" value="ECO:0007669"/>
    <property type="project" value="TreeGrafter"/>
</dbReference>
<dbReference type="GO" id="GO:0031838">
    <property type="term" value="C:haptoglobin-hemoglobin complex"/>
    <property type="evidence" value="ECO:0007669"/>
    <property type="project" value="TreeGrafter"/>
</dbReference>
<dbReference type="GO" id="GO:0005833">
    <property type="term" value="C:hemoglobin complex"/>
    <property type="evidence" value="ECO:0007669"/>
    <property type="project" value="InterPro"/>
</dbReference>
<dbReference type="GO" id="GO:0031720">
    <property type="term" value="F:haptoglobin binding"/>
    <property type="evidence" value="ECO:0007669"/>
    <property type="project" value="TreeGrafter"/>
</dbReference>
<dbReference type="GO" id="GO:0020037">
    <property type="term" value="F:heme binding"/>
    <property type="evidence" value="ECO:0007669"/>
    <property type="project" value="InterPro"/>
</dbReference>
<dbReference type="GO" id="GO:0046872">
    <property type="term" value="F:metal ion binding"/>
    <property type="evidence" value="ECO:0007669"/>
    <property type="project" value="UniProtKB-KW"/>
</dbReference>
<dbReference type="GO" id="GO:0043177">
    <property type="term" value="F:organic acid binding"/>
    <property type="evidence" value="ECO:0007669"/>
    <property type="project" value="TreeGrafter"/>
</dbReference>
<dbReference type="GO" id="GO:0019825">
    <property type="term" value="F:oxygen binding"/>
    <property type="evidence" value="ECO:0007669"/>
    <property type="project" value="InterPro"/>
</dbReference>
<dbReference type="GO" id="GO:0005344">
    <property type="term" value="F:oxygen carrier activity"/>
    <property type="evidence" value="ECO:0007669"/>
    <property type="project" value="UniProtKB-KW"/>
</dbReference>
<dbReference type="GO" id="GO:0004601">
    <property type="term" value="F:peroxidase activity"/>
    <property type="evidence" value="ECO:0007669"/>
    <property type="project" value="TreeGrafter"/>
</dbReference>
<dbReference type="GO" id="GO:0042744">
    <property type="term" value="P:hydrogen peroxide catabolic process"/>
    <property type="evidence" value="ECO:0007669"/>
    <property type="project" value="TreeGrafter"/>
</dbReference>
<dbReference type="CDD" id="cd08925">
    <property type="entry name" value="Hb-beta-like"/>
    <property type="match status" value="1"/>
</dbReference>
<dbReference type="FunFam" id="1.10.490.10:FF:000001">
    <property type="entry name" value="Hemoglobin subunit beta"/>
    <property type="match status" value="1"/>
</dbReference>
<dbReference type="Gene3D" id="1.10.490.10">
    <property type="entry name" value="Globins"/>
    <property type="match status" value="1"/>
</dbReference>
<dbReference type="InterPro" id="IPR000971">
    <property type="entry name" value="Globin"/>
</dbReference>
<dbReference type="InterPro" id="IPR009050">
    <property type="entry name" value="Globin-like_sf"/>
</dbReference>
<dbReference type="InterPro" id="IPR012292">
    <property type="entry name" value="Globin/Proto"/>
</dbReference>
<dbReference type="InterPro" id="IPR002337">
    <property type="entry name" value="Hemoglobin_b"/>
</dbReference>
<dbReference type="InterPro" id="IPR050056">
    <property type="entry name" value="Hemoglobin_oxygen_transport"/>
</dbReference>
<dbReference type="PANTHER" id="PTHR11442">
    <property type="entry name" value="HEMOGLOBIN FAMILY MEMBER"/>
    <property type="match status" value="1"/>
</dbReference>
<dbReference type="PANTHER" id="PTHR11442:SF7">
    <property type="entry name" value="HEMOGLOBIN SUBUNIT EPSILON"/>
    <property type="match status" value="1"/>
</dbReference>
<dbReference type="Pfam" id="PF00042">
    <property type="entry name" value="Globin"/>
    <property type="match status" value="1"/>
</dbReference>
<dbReference type="PRINTS" id="PR00814">
    <property type="entry name" value="BETAHAEM"/>
</dbReference>
<dbReference type="SUPFAM" id="SSF46458">
    <property type="entry name" value="Globin-like"/>
    <property type="match status" value="1"/>
</dbReference>
<dbReference type="PROSITE" id="PS01033">
    <property type="entry name" value="GLOBIN"/>
    <property type="match status" value="1"/>
</dbReference>
<comment type="function">
    <text evidence="2 3">Involved in oxygen transport from gills to the various peripheral tissues.</text>
</comment>
<comment type="subunit">
    <text evidence="2">Hb 2 is a heterotetramer of two alpha-2 and two beta-2 chains. Hb 3 is a heterotetramer of two alpha-1 and two beta-2 chains.</text>
</comment>
<comment type="tissue specificity">
    <text evidence="3">Red blood cells.</text>
</comment>
<comment type="miscellaneous">
    <text>Hb 3 displays a Bohr effect, which is enhanced by organophosphates, and a Root effect, which is enhanced by ATP.</text>
</comment>
<comment type="similarity">
    <text evidence="1">Belongs to the globin family.</text>
</comment>
<organism>
    <name type="scientific">Gadus morhua</name>
    <name type="common">Atlantic cod</name>
    <dbReference type="NCBI Taxonomy" id="8049"/>
    <lineage>
        <taxon>Eukaryota</taxon>
        <taxon>Metazoa</taxon>
        <taxon>Chordata</taxon>
        <taxon>Craniata</taxon>
        <taxon>Vertebrata</taxon>
        <taxon>Euteleostomi</taxon>
        <taxon>Actinopterygii</taxon>
        <taxon>Neopterygii</taxon>
        <taxon>Teleostei</taxon>
        <taxon>Neoteleostei</taxon>
        <taxon>Acanthomorphata</taxon>
        <taxon>Zeiogadaria</taxon>
        <taxon>Gadariae</taxon>
        <taxon>Gadiformes</taxon>
        <taxon>Gadoidei</taxon>
        <taxon>Gadidae</taxon>
        <taxon>Gadus</taxon>
    </lineage>
</organism>
<accession>P84611</accession>
<protein>
    <recommendedName>
        <fullName>Hemoglobin subunit beta-2</fullName>
    </recommendedName>
    <alternativeName>
        <fullName>Beta-2-globin</fullName>
    </alternativeName>
    <alternativeName>
        <fullName>Hemoglobin beta-2 chain</fullName>
    </alternativeName>
</protein>
<sequence>MVEWTDEERTIINDIFSTLDYEEIGRKSLCRCLIVYPWTQRYFGAFGNLYNAETIMANPLIAAHGTKILHGLDRALKNMDDIKNTYAELSLLHSDKLHVDPDNFRLLADCLTVVIAAKMGPAFTVDTQVAVQKFLSVVVSALGRQYH</sequence>
<gene>
    <name type="primary">hbb2</name>
</gene>
<name>HBB2_GADMO</name>
<keyword id="KW-0903">Direct protein sequencing</keyword>
<keyword id="KW-0349">Heme</keyword>
<keyword id="KW-0408">Iron</keyword>
<keyword id="KW-0479">Metal-binding</keyword>
<keyword id="KW-0561">Oxygen transport</keyword>
<keyword id="KW-1185">Reference proteome</keyword>
<keyword id="KW-0813">Transport</keyword>
<feature type="initiator methionine" description="Removed" evidence="2">
    <location>
        <position position="1"/>
    </location>
</feature>
<feature type="chain" id="PRO_0000247585" description="Hemoglobin subunit beta-2">
    <location>
        <begin position="2"/>
        <end position="147"/>
    </location>
</feature>
<feature type="domain" description="Globin" evidence="1">
    <location>
        <begin position="3"/>
        <end position="147"/>
    </location>
</feature>
<feature type="binding site" description="distal binding residue" evidence="1">
    <location>
        <position position="64"/>
    </location>
    <ligand>
        <name>heme b</name>
        <dbReference type="ChEBI" id="CHEBI:60344"/>
    </ligand>
    <ligandPart>
        <name>Fe</name>
        <dbReference type="ChEBI" id="CHEBI:18248"/>
    </ligandPart>
</feature>
<feature type="binding site" description="proximal binding residue" evidence="1">
    <location>
        <position position="93"/>
    </location>
    <ligand>
        <name>heme b</name>
        <dbReference type="ChEBI" id="CHEBI:60344"/>
    </ligand>
    <ligandPart>
        <name>Fe</name>
        <dbReference type="ChEBI" id="CHEBI:18248"/>
    </ligandPart>
</feature>
<proteinExistence type="evidence at protein level"/>
<evidence type="ECO:0000255" key="1">
    <source>
        <dbReference type="PROSITE-ProRule" id="PRU00238"/>
    </source>
</evidence>
<evidence type="ECO:0000269" key="2">
    <source>
    </source>
</evidence>
<evidence type="ECO:0000305" key="3"/>